<feature type="chain" id="PRO_1000078687" description="Protein RecA">
    <location>
        <begin position="1"/>
        <end position="334"/>
    </location>
</feature>
<feature type="binding site" evidence="1">
    <location>
        <begin position="65"/>
        <end position="72"/>
    </location>
    <ligand>
        <name>ATP</name>
        <dbReference type="ChEBI" id="CHEBI:30616"/>
    </ligand>
</feature>
<comment type="function">
    <text evidence="1">Can catalyze the hydrolysis of ATP in the presence of single-stranded DNA, the ATP-dependent uptake of single-stranded DNA by duplex DNA, and the ATP-dependent hybridization of homologous single-stranded DNAs. It interacts with LexA causing its activation and leading to its autocatalytic cleavage.</text>
</comment>
<comment type="subcellular location">
    <subcellularLocation>
        <location evidence="1">Cytoplasm</location>
    </subcellularLocation>
</comment>
<comment type="similarity">
    <text evidence="1">Belongs to the RecA family.</text>
</comment>
<reference key="1">
    <citation type="submission" date="2008-02" db="EMBL/GenBank/DDBJ databases">
        <title>Genome sequence of Ureaplasma parvum serovar 3.</title>
        <authorList>
            <person name="Methe B.A."/>
            <person name="Glass J."/>
            <person name="Waites K."/>
            <person name="Shrivastava S."/>
        </authorList>
    </citation>
    <scope>NUCLEOTIDE SEQUENCE [LARGE SCALE GENOMIC DNA]</scope>
    <source>
        <strain>ATCC 27815 / 27 / NCTC 11736</strain>
    </source>
</reference>
<keyword id="KW-0067">ATP-binding</keyword>
<keyword id="KW-0963">Cytoplasm</keyword>
<keyword id="KW-0227">DNA damage</keyword>
<keyword id="KW-0233">DNA recombination</keyword>
<keyword id="KW-0234">DNA repair</keyword>
<keyword id="KW-0238">DNA-binding</keyword>
<keyword id="KW-0547">Nucleotide-binding</keyword>
<keyword id="KW-0742">SOS response</keyword>
<dbReference type="EMBL" id="CP000942">
    <property type="protein sequence ID" value="ACA32802.1"/>
    <property type="molecule type" value="Genomic_DNA"/>
</dbReference>
<dbReference type="RefSeq" id="WP_006688656.1">
    <property type="nucleotide sequence ID" value="NC_010503.1"/>
</dbReference>
<dbReference type="SMR" id="B1AI69"/>
<dbReference type="GeneID" id="29672269"/>
<dbReference type="KEGG" id="upa:UPA3_0083"/>
<dbReference type="HOGENOM" id="CLU_040469_1_2_14"/>
<dbReference type="Proteomes" id="UP000002162">
    <property type="component" value="Chromosome"/>
</dbReference>
<dbReference type="GO" id="GO:0005829">
    <property type="term" value="C:cytosol"/>
    <property type="evidence" value="ECO:0007669"/>
    <property type="project" value="TreeGrafter"/>
</dbReference>
<dbReference type="GO" id="GO:0005524">
    <property type="term" value="F:ATP binding"/>
    <property type="evidence" value="ECO:0007669"/>
    <property type="project" value="UniProtKB-UniRule"/>
</dbReference>
<dbReference type="GO" id="GO:0016887">
    <property type="term" value="F:ATP hydrolysis activity"/>
    <property type="evidence" value="ECO:0007669"/>
    <property type="project" value="InterPro"/>
</dbReference>
<dbReference type="GO" id="GO:0140664">
    <property type="term" value="F:ATP-dependent DNA damage sensor activity"/>
    <property type="evidence" value="ECO:0007669"/>
    <property type="project" value="InterPro"/>
</dbReference>
<dbReference type="GO" id="GO:0003684">
    <property type="term" value="F:damaged DNA binding"/>
    <property type="evidence" value="ECO:0007669"/>
    <property type="project" value="UniProtKB-UniRule"/>
</dbReference>
<dbReference type="GO" id="GO:0003697">
    <property type="term" value="F:single-stranded DNA binding"/>
    <property type="evidence" value="ECO:0007669"/>
    <property type="project" value="UniProtKB-UniRule"/>
</dbReference>
<dbReference type="GO" id="GO:0006310">
    <property type="term" value="P:DNA recombination"/>
    <property type="evidence" value="ECO:0007669"/>
    <property type="project" value="UniProtKB-UniRule"/>
</dbReference>
<dbReference type="GO" id="GO:0006281">
    <property type="term" value="P:DNA repair"/>
    <property type="evidence" value="ECO:0007669"/>
    <property type="project" value="UniProtKB-UniRule"/>
</dbReference>
<dbReference type="GO" id="GO:0009432">
    <property type="term" value="P:SOS response"/>
    <property type="evidence" value="ECO:0007669"/>
    <property type="project" value="UniProtKB-UniRule"/>
</dbReference>
<dbReference type="CDD" id="cd00983">
    <property type="entry name" value="RecA"/>
    <property type="match status" value="1"/>
</dbReference>
<dbReference type="Gene3D" id="3.40.50.300">
    <property type="entry name" value="P-loop containing nucleotide triphosphate hydrolases"/>
    <property type="match status" value="1"/>
</dbReference>
<dbReference type="Gene3D" id="3.30.250.10">
    <property type="entry name" value="RecA protein, C-terminal domain"/>
    <property type="match status" value="1"/>
</dbReference>
<dbReference type="HAMAP" id="MF_00268">
    <property type="entry name" value="RecA"/>
    <property type="match status" value="1"/>
</dbReference>
<dbReference type="InterPro" id="IPR003593">
    <property type="entry name" value="AAA+_ATPase"/>
</dbReference>
<dbReference type="InterPro" id="IPR013765">
    <property type="entry name" value="DNA_recomb/repair_RecA"/>
</dbReference>
<dbReference type="InterPro" id="IPR020584">
    <property type="entry name" value="DNA_recomb/repair_RecA_CS"/>
</dbReference>
<dbReference type="InterPro" id="IPR027417">
    <property type="entry name" value="P-loop_NTPase"/>
</dbReference>
<dbReference type="InterPro" id="IPR049261">
    <property type="entry name" value="RecA-like_C"/>
</dbReference>
<dbReference type="InterPro" id="IPR049428">
    <property type="entry name" value="RecA-like_N"/>
</dbReference>
<dbReference type="InterPro" id="IPR020588">
    <property type="entry name" value="RecA_ATP-bd"/>
</dbReference>
<dbReference type="InterPro" id="IPR023400">
    <property type="entry name" value="RecA_C_sf"/>
</dbReference>
<dbReference type="InterPro" id="IPR020587">
    <property type="entry name" value="RecA_monomer-monomer_interface"/>
</dbReference>
<dbReference type="NCBIfam" id="TIGR02012">
    <property type="entry name" value="tigrfam_recA"/>
    <property type="match status" value="1"/>
</dbReference>
<dbReference type="PANTHER" id="PTHR45900:SF1">
    <property type="entry name" value="MITOCHONDRIAL DNA REPAIR PROTEIN RECA HOMOLOG-RELATED"/>
    <property type="match status" value="1"/>
</dbReference>
<dbReference type="PANTHER" id="PTHR45900">
    <property type="entry name" value="RECA"/>
    <property type="match status" value="1"/>
</dbReference>
<dbReference type="Pfam" id="PF00154">
    <property type="entry name" value="RecA"/>
    <property type="match status" value="1"/>
</dbReference>
<dbReference type="Pfam" id="PF21096">
    <property type="entry name" value="RecA_C"/>
    <property type="match status" value="1"/>
</dbReference>
<dbReference type="PRINTS" id="PR00142">
    <property type="entry name" value="RECA"/>
</dbReference>
<dbReference type="SMART" id="SM00382">
    <property type="entry name" value="AAA"/>
    <property type="match status" value="1"/>
</dbReference>
<dbReference type="SUPFAM" id="SSF52540">
    <property type="entry name" value="P-loop containing nucleoside triphosphate hydrolases"/>
    <property type="match status" value="1"/>
</dbReference>
<dbReference type="SUPFAM" id="SSF54752">
    <property type="entry name" value="RecA protein, C-terminal domain"/>
    <property type="match status" value="1"/>
</dbReference>
<dbReference type="PROSITE" id="PS00321">
    <property type="entry name" value="RECA_1"/>
    <property type="match status" value="1"/>
</dbReference>
<dbReference type="PROSITE" id="PS50162">
    <property type="entry name" value="RECA_2"/>
    <property type="match status" value="1"/>
</dbReference>
<dbReference type="PROSITE" id="PS50163">
    <property type="entry name" value="RECA_3"/>
    <property type="match status" value="1"/>
</dbReference>
<proteinExistence type="inferred from homology"/>
<accession>B1AI69</accession>
<organism>
    <name type="scientific">Ureaplasma parvum serovar 3 (strain ATCC 27815 / 27 / NCTC 11736)</name>
    <dbReference type="NCBI Taxonomy" id="505682"/>
    <lineage>
        <taxon>Bacteria</taxon>
        <taxon>Bacillati</taxon>
        <taxon>Mycoplasmatota</taxon>
        <taxon>Mycoplasmoidales</taxon>
        <taxon>Mycoplasmoidaceae</taxon>
        <taxon>Ureaplasma</taxon>
    </lineage>
</organism>
<name>RECA_UREP2</name>
<gene>
    <name evidence="1" type="primary">recA</name>
    <name type="ordered locus">UPA3_0083</name>
</gene>
<protein>
    <recommendedName>
        <fullName evidence="1">Protein RecA</fullName>
    </recommendedName>
    <alternativeName>
        <fullName evidence="1">Recombinase A</fullName>
    </alternativeName>
</protein>
<evidence type="ECO:0000255" key="1">
    <source>
        <dbReference type="HAMAP-Rule" id="MF_00268"/>
    </source>
</evidence>
<sequence length="334" mass="37285">MKENNNLEKLDPIATLETKFAKSSYFIADEIKDEKINAISTGSIHIDQITGINGIPVGKITEIYGNESSGKTTIALQTIAECQKTGGTVVLLDLEGSFDINYAKSLKVDLTKLIITQPQTGEQAFDMIETLIKTNSIDLIVIDSVAAMLPESEYQANMNEALMGAHARLMSKGLRKIQPLINKSKTAIIFINQLREKINTFFGNPEMTTGGKALKFYASLRIETKKADLIKEGINKIGIKTKVTTVKNKLAPPLQTCFIDIFFGSGFDYNNEIIDFAIQYGVLKKNGSWFYFNDNKIGQGREQLKNTLSKNNELFIQISEKTLEFVNNEKSNWQ</sequence>